<proteinExistence type="predicted"/>
<gene>
    <name type="primary">ylqH</name>
    <name type="ordered locus">BSU16080</name>
</gene>
<reference key="1">
    <citation type="submission" date="1997-10" db="EMBL/GenBank/DDBJ databases">
        <title>Cloning and sequencing 7.5 Kbp of DNA from Bacillus subtilis upstream of the codV gene.</title>
        <authorList>
            <person name="Foulger D."/>
            <person name="Errington J."/>
        </authorList>
    </citation>
    <scope>NUCLEOTIDE SEQUENCE [GENOMIC DNA]</scope>
    <source>
        <strain>168</strain>
    </source>
</reference>
<reference key="2">
    <citation type="journal article" date="1997" name="Nature">
        <title>The complete genome sequence of the Gram-positive bacterium Bacillus subtilis.</title>
        <authorList>
            <person name="Kunst F."/>
            <person name="Ogasawara N."/>
            <person name="Moszer I."/>
            <person name="Albertini A.M."/>
            <person name="Alloni G."/>
            <person name="Azevedo V."/>
            <person name="Bertero M.G."/>
            <person name="Bessieres P."/>
            <person name="Bolotin A."/>
            <person name="Borchert S."/>
            <person name="Borriss R."/>
            <person name="Boursier L."/>
            <person name="Brans A."/>
            <person name="Braun M."/>
            <person name="Brignell S.C."/>
            <person name="Bron S."/>
            <person name="Brouillet S."/>
            <person name="Bruschi C.V."/>
            <person name="Caldwell B."/>
            <person name="Capuano V."/>
            <person name="Carter N.M."/>
            <person name="Choi S.-K."/>
            <person name="Codani J.-J."/>
            <person name="Connerton I.F."/>
            <person name="Cummings N.J."/>
            <person name="Daniel R.A."/>
            <person name="Denizot F."/>
            <person name="Devine K.M."/>
            <person name="Duesterhoeft A."/>
            <person name="Ehrlich S.D."/>
            <person name="Emmerson P.T."/>
            <person name="Entian K.-D."/>
            <person name="Errington J."/>
            <person name="Fabret C."/>
            <person name="Ferrari E."/>
            <person name="Foulger D."/>
            <person name="Fritz C."/>
            <person name="Fujita M."/>
            <person name="Fujita Y."/>
            <person name="Fuma S."/>
            <person name="Galizzi A."/>
            <person name="Galleron N."/>
            <person name="Ghim S.-Y."/>
            <person name="Glaser P."/>
            <person name="Goffeau A."/>
            <person name="Golightly E.J."/>
            <person name="Grandi G."/>
            <person name="Guiseppi G."/>
            <person name="Guy B.J."/>
            <person name="Haga K."/>
            <person name="Haiech J."/>
            <person name="Harwood C.R."/>
            <person name="Henaut A."/>
            <person name="Hilbert H."/>
            <person name="Holsappel S."/>
            <person name="Hosono S."/>
            <person name="Hullo M.-F."/>
            <person name="Itaya M."/>
            <person name="Jones L.-M."/>
            <person name="Joris B."/>
            <person name="Karamata D."/>
            <person name="Kasahara Y."/>
            <person name="Klaerr-Blanchard M."/>
            <person name="Klein C."/>
            <person name="Kobayashi Y."/>
            <person name="Koetter P."/>
            <person name="Koningstein G."/>
            <person name="Krogh S."/>
            <person name="Kumano M."/>
            <person name="Kurita K."/>
            <person name="Lapidus A."/>
            <person name="Lardinois S."/>
            <person name="Lauber J."/>
            <person name="Lazarevic V."/>
            <person name="Lee S.-M."/>
            <person name="Levine A."/>
            <person name="Liu H."/>
            <person name="Masuda S."/>
            <person name="Mauel C."/>
            <person name="Medigue C."/>
            <person name="Medina N."/>
            <person name="Mellado R.P."/>
            <person name="Mizuno M."/>
            <person name="Moestl D."/>
            <person name="Nakai S."/>
            <person name="Noback M."/>
            <person name="Noone D."/>
            <person name="O'Reilly M."/>
            <person name="Ogawa K."/>
            <person name="Ogiwara A."/>
            <person name="Oudega B."/>
            <person name="Park S.-H."/>
            <person name="Parro V."/>
            <person name="Pohl T.M."/>
            <person name="Portetelle D."/>
            <person name="Porwollik S."/>
            <person name="Prescott A.M."/>
            <person name="Presecan E."/>
            <person name="Pujic P."/>
            <person name="Purnelle B."/>
            <person name="Rapoport G."/>
            <person name="Rey M."/>
            <person name="Reynolds S."/>
            <person name="Rieger M."/>
            <person name="Rivolta C."/>
            <person name="Rocha E."/>
            <person name="Roche B."/>
            <person name="Rose M."/>
            <person name="Sadaie Y."/>
            <person name="Sato T."/>
            <person name="Scanlan E."/>
            <person name="Schleich S."/>
            <person name="Schroeter R."/>
            <person name="Scoffone F."/>
            <person name="Sekiguchi J."/>
            <person name="Sekowska A."/>
            <person name="Seror S.J."/>
            <person name="Serror P."/>
            <person name="Shin B.-S."/>
            <person name="Soldo B."/>
            <person name="Sorokin A."/>
            <person name="Tacconi E."/>
            <person name="Takagi T."/>
            <person name="Takahashi H."/>
            <person name="Takemaru K."/>
            <person name="Takeuchi M."/>
            <person name="Tamakoshi A."/>
            <person name="Tanaka T."/>
            <person name="Terpstra P."/>
            <person name="Tognoni A."/>
            <person name="Tosato V."/>
            <person name="Uchiyama S."/>
            <person name="Vandenbol M."/>
            <person name="Vannier F."/>
            <person name="Vassarotti A."/>
            <person name="Viari A."/>
            <person name="Wambutt R."/>
            <person name="Wedler E."/>
            <person name="Wedler H."/>
            <person name="Weitzenegger T."/>
            <person name="Winters P."/>
            <person name="Wipat A."/>
            <person name="Yamamoto H."/>
            <person name="Yamane K."/>
            <person name="Yasumoto K."/>
            <person name="Yata K."/>
            <person name="Yoshida K."/>
            <person name="Yoshikawa H.-F."/>
            <person name="Zumstein E."/>
            <person name="Yoshikawa H."/>
            <person name="Danchin A."/>
        </authorList>
    </citation>
    <scope>NUCLEOTIDE SEQUENCE [LARGE SCALE GENOMIC DNA]</scope>
    <source>
        <strain>168</strain>
    </source>
</reference>
<sequence>MKEQTPIRKAVALHYDEQKDKAPRVIATGKGHVADNIIKEAKKAGVPIQEDRTLVELMRHLTVDDQIPEALYETVAEIFSFIYKLDESVKNKK</sequence>
<protein>
    <recommendedName>
        <fullName>Uncharacterized protein YlqH</fullName>
    </recommendedName>
</protein>
<dbReference type="EMBL" id="AJ000975">
    <property type="protein sequence ID" value="CAA04418.1"/>
    <property type="molecule type" value="Genomic_DNA"/>
</dbReference>
<dbReference type="EMBL" id="AL009126">
    <property type="protein sequence ID" value="CAB13481.1"/>
    <property type="molecule type" value="Genomic_DNA"/>
</dbReference>
<dbReference type="PIR" id="H69880">
    <property type="entry name" value="H69880"/>
</dbReference>
<dbReference type="RefSeq" id="NP_389490.1">
    <property type="nucleotide sequence ID" value="NC_000964.3"/>
</dbReference>
<dbReference type="RefSeq" id="WP_003232001.1">
    <property type="nucleotide sequence ID" value="NZ_OZ025638.1"/>
</dbReference>
<dbReference type="SMR" id="O34867"/>
<dbReference type="FunCoup" id="O34867">
    <property type="interactions" value="36"/>
</dbReference>
<dbReference type="STRING" id="224308.BSU16080"/>
<dbReference type="PaxDb" id="224308-BSU16080"/>
<dbReference type="EnsemblBacteria" id="CAB13481">
    <property type="protein sequence ID" value="CAB13481"/>
    <property type="gene ID" value="BSU_16080"/>
</dbReference>
<dbReference type="GeneID" id="938163"/>
<dbReference type="KEGG" id="bsu:BSU16080"/>
<dbReference type="PATRIC" id="fig|224308.179.peg.1748"/>
<dbReference type="eggNOG" id="COG2257">
    <property type="taxonomic scope" value="Bacteria"/>
</dbReference>
<dbReference type="InParanoid" id="O34867"/>
<dbReference type="OrthoDB" id="5244399at2"/>
<dbReference type="PhylomeDB" id="O34867"/>
<dbReference type="BioCyc" id="BSUB:BSU16080-MONOMER"/>
<dbReference type="Proteomes" id="UP000001570">
    <property type="component" value="Chromosome"/>
</dbReference>
<dbReference type="GO" id="GO:0016020">
    <property type="term" value="C:membrane"/>
    <property type="evidence" value="ECO:0007669"/>
    <property type="project" value="InterPro"/>
</dbReference>
<dbReference type="GO" id="GO:0009306">
    <property type="term" value="P:protein secretion"/>
    <property type="evidence" value="ECO:0007669"/>
    <property type="project" value="InterPro"/>
</dbReference>
<dbReference type="Gene3D" id="3.40.1690.10">
    <property type="entry name" value="secretion proteins EscU"/>
    <property type="match status" value="1"/>
</dbReference>
<dbReference type="InterPro" id="IPR004683">
    <property type="entry name" value="T3SS_FlhB-rel"/>
</dbReference>
<dbReference type="InterPro" id="IPR006135">
    <property type="entry name" value="T3SS_substrate_exporter"/>
</dbReference>
<dbReference type="InterPro" id="IPR029025">
    <property type="entry name" value="T3SS_substrate_exporter_C"/>
</dbReference>
<dbReference type="NCBIfam" id="TIGR00789">
    <property type="entry name" value="flhB_rel"/>
    <property type="match status" value="1"/>
</dbReference>
<dbReference type="PANTHER" id="PTHR30531">
    <property type="entry name" value="FLAGELLAR BIOSYNTHETIC PROTEIN FLHB"/>
    <property type="match status" value="1"/>
</dbReference>
<dbReference type="PANTHER" id="PTHR30531:SF12">
    <property type="entry name" value="FLAGELLAR BIOSYNTHETIC PROTEIN FLHB"/>
    <property type="match status" value="1"/>
</dbReference>
<dbReference type="Pfam" id="PF01312">
    <property type="entry name" value="Bac_export_2"/>
    <property type="match status" value="1"/>
</dbReference>
<dbReference type="SUPFAM" id="SSF160544">
    <property type="entry name" value="EscU C-terminal domain-like"/>
    <property type="match status" value="1"/>
</dbReference>
<keyword id="KW-1185">Reference proteome</keyword>
<organism>
    <name type="scientific">Bacillus subtilis (strain 168)</name>
    <dbReference type="NCBI Taxonomy" id="224308"/>
    <lineage>
        <taxon>Bacteria</taxon>
        <taxon>Bacillati</taxon>
        <taxon>Bacillota</taxon>
        <taxon>Bacilli</taxon>
        <taxon>Bacillales</taxon>
        <taxon>Bacillaceae</taxon>
        <taxon>Bacillus</taxon>
    </lineage>
</organism>
<feature type="chain" id="PRO_0000390889" description="Uncharacterized protein YlqH">
    <location>
        <begin position="1"/>
        <end position="93"/>
    </location>
</feature>
<name>YLQH_BACSU</name>
<accession>O34867</accession>
<accession>Q796I1</accession>